<accession>A1BHN9</accession>
<comment type="function">
    <text evidence="1">Catalyzes the reversible oxidation of malate to oxaloacetate.</text>
</comment>
<comment type="catalytic activity">
    <reaction evidence="1">
        <text>(S)-malate + NAD(+) = oxaloacetate + NADH + H(+)</text>
        <dbReference type="Rhea" id="RHEA:21432"/>
        <dbReference type="ChEBI" id="CHEBI:15378"/>
        <dbReference type="ChEBI" id="CHEBI:15589"/>
        <dbReference type="ChEBI" id="CHEBI:16452"/>
        <dbReference type="ChEBI" id="CHEBI:57540"/>
        <dbReference type="ChEBI" id="CHEBI:57945"/>
        <dbReference type="EC" id="1.1.1.37"/>
    </reaction>
</comment>
<comment type="similarity">
    <text evidence="1">Belongs to the LDH/MDH superfamily. MDH type 3 family.</text>
</comment>
<keyword id="KW-0520">NAD</keyword>
<keyword id="KW-0560">Oxidoreductase</keyword>
<keyword id="KW-1185">Reference proteome</keyword>
<keyword id="KW-0816">Tricarboxylic acid cycle</keyword>
<evidence type="ECO:0000255" key="1">
    <source>
        <dbReference type="HAMAP-Rule" id="MF_00487"/>
    </source>
</evidence>
<proteinExistence type="inferred from homology"/>
<organism>
    <name type="scientific">Chlorobium phaeobacteroides (strain DSM 266 / SMG 266 / 2430)</name>
    <dbReference type="NCBI Taxonomy" id="290317"/>
    <lineage>
        <taxon>Bacteria</taxon>
        <taxon>Pseudomonadati</taxon>
        <taxon>Chlorobiota</taxon>
        <taxon>Chlorobiia</taxon>
        <taxon>Chlorobiales</taxon>
        <taxon>Chlorobiaceae</taxon>
        <taxon>Chlorobium/Pelodictyon group</taxon>
        <taxon>Chlorobium</taxon>
    </lineage>
</organism>
<sequence length="310" mass="32910">MKISVIGAGNVGATAAHRLAEKQLAHEVVLIDIVEGIPQGKALDMYESGPVGLFDTAIHGSNDYMASADSDIVLITAGLARKPGMTREDLLMKNAGIVKEVTDQVMKHSSNPILVMVSNPLDVMTFVAHASSGLGKERVIGMAGVLDAARFRSFIAEELNVSMQDVNAFVLGGHGDSMVPVVKYTSVAGIPITELLSQEKIDALVERTRNGGVEIVNYLKNGSAFYAPAASAVEMIEAIVKDRKRILACTTLLEGEYGINNVFCGVPVKIGKNGVEEILEINLAPAELDALKHSASLVQENCKSLEALLA</sequence>
<protein>
    <recommendedName>
        <fullName evidence="1">Malate dehydrogenase</fullName>
        <ecNumber evidence="1">1.1.1.37</ecNumber>
    </recommendedName>
</protein>
<name>MDH_CHLPD</name>
<reference key="1">
    <citation type="submission" date="2006-12" db="EMBL/GenBank/DDBJ databases">
        <title>Complete sequence of Chlorobium phaeobacteroides DSM 266.</title>
        <authorList>
            <consortium name="US DOE Joint Genome Institute"/>
            <person name="Copeland A."/>
            <person name="Lucas S."/>
            <person name="Lapidus A."/>
            <person name="Barry K."/>
            <person name="Detter J.C."/>
            <person name="Glavina del Rio T."/>
            <person name="Hammon N."/>
            <person name="Israni S."/>
            <person name="Pitluck S."/>
            <person name="Goltsman E."/>
            <person name="Schmutz J."/>
            <person name="Larimer F."/>
            <person name="Land M."/>
            <person name="Hauser L."/>
            <person name="Mikhailova N."/>
            <person name="Li T."/>
            <person name="Overmann J."/>
            <person name="Bryant D.A."/>
            <person name="Richardson P."/>
        </authorList>
    </citation>
    <scope>NUCLEOTIDE SEQUENCE [LARGE SCALE GENOMIC DNA]</scope>
    <source>
        <strain>DSM 266 / SMG 266 / 2430</strain>
    </source>
</reference>
<gene>
    <name evidence="1" type="primary">mdh</name>
    <name type="ordered locus">Cpha266_1900</name>
</gene>
<dbReference type="EC" id="1.1.1.37" evidence="1"/>
<dbReference type="EMBL" id="CP000492">
    <property type="protein sequence ID" value="ABL65916.1"/>
    <property type="molecule type" value="Genomic_DNA"/>
</dbReference>
<dbReference type="RefSeq" id="WP_011745723.1">
    <property type="nucleotide sequence ID" value="NC_008639.1"/>
</dbReference>
<dbReference type="SMR" id="A1BHN9"/>
<dbReference type="STRING" id="290317.Cpha266_1900"/>
<dbReference type="KEGG" id="cph:Cpha266_1900"/>
<dbReference type="eggNOG" id="COG0039">
    <property type="taxonomic scope" value="Bacteria"/>
</dbReference>
<dbReference type="HOGENOM" id="CLU_045401_2_1_10"/>
<dbReference type="OrthoDB" id="9802969at2"/>
<dbReference type="Proteomes" id="UP000008701">
    <property type="component" value="Chromosome"/>
</dbReference>
<dbReference type="GO" id="GO:0004459">
    <property type="term" value="F:L-lactate dehydrogenase activity"/>
    <property type="evidence" value="ECO:0007669"/>
    <property type="project" value="TreeGrafter"/>
</dbReference>
<dbReference type="GO" id="GO:0030060">
    <property type="term" value="F:L-malate dehydrogenase (NAD+) activity"/>
    <property type="evidence" value="ECO:0007669"/>
    <property type="project" value="UniProtKB-UniRule"/>
</dbReference>
<dbReference type="GO" id="GO:0006089">
    <property type="term" value="P:lactate metabolic process"/>
    <property type="evidence" value="ECO:0007669"/>
    <property type="project" value="TreeGrafter"/>
</dbReference>
<dbReference type="GO" id="GO:0006099">
    <property type="term" value="P:tricarboxylic acid cycle"/>
    <property type="evidence" value="ECO:0007669"/>
    <property type="project" value="UniProtKB-UniRule"/>
</dbReference>
<dbReference type="CDD" id="cd01339">
    <property type="entry name" value="LDH-like_MDH"/>
    <property type="match status" value="1"/>
</dbReference>
<dbReference type="FunFam" id="3.40.50.720:FF:000018">
    <property type="entry name" value="Malate dehydrogenase"/>
    <property type="match status" value="1"/>
</dbReference>
<dbReference type="FunFam" id="3.90.110.10:FF:000004">
    <property type="entry name" value="Malate dehydrogenase"/>
    <property type="match status" value="1"/>
</dbReference>
<dbReference type="Gene3D" id="3.90.110.10">
    <property type="entry name" value="Lactate dehydrogenase/glycoside hydrolase, family 4, C-terminal"/>
    <property type="match status" value="1"/>
</dbReference>
<dbReference type="Gene3D" id="3.40.50.720">
    <property type="entry name" value="NAD(P)-binding Rossmann-like Domain"/>
    <property type="match status" value="1"/>
</dbReference>
<dbReference type="HAMAP" id="MF_00487">
    <property type="entry name" value="Malate_dehydrog_3"/>
    <property type="match status" value="1"/>
</dbReference>
<dbReference type="InterPro" id="IPR001557">
    <property type="entry name" value="L-lactate/malate_DH"/>
</dbReference>
<dbReference type="InterPro" id="IPR022383">
    <property type="entry name" value="Lactate/malate_DH_C"/>
</dbReference>
<dbReference type="InterPro" id="IPR001236">
    <property type="entry name" value="Lactate/malate_DH_N"/>
</dbReference>
<dbReference type="InterPro" id="IPR015955">
    <property type="entry name" value="Lactate_DH/Glyco_Ohase_4_C"/>
</dbReference>
<dbReference type="InterPro" id="IPR011275">
    <property type="entry name" value="Malate_DH_type3"/>
</dbReference>
<dbReference type="InterPro" id="IPR036291">
    <property type="entry name" value="NAD(P)-bd_dom_sf"/>
</dbReference>
<dbReference type="NCBIfam" id="TIGR01763">
    <property type="entry name" value="MalateDH_bact"/>
    <property type="match status" value="1"/>
</dbReference>
<dbReference type="NCBIfam" id="NF004863">
    <property type="entry name" value="PRK06223.1"/>
    <property type="match status" value="1"/>
</dbReference>
<dbReference type="PANTHER" id="PTHR43128">
    <property type="entry name" value="L-2-HYDROXYCARBOXYLATE DEHYDROGENASE (NAD(P)(+))"/>
    <property type="match status" value="1"/>
</dbReference>
<dbReference type="PANTHER" id="PTHR43128:SF16">
    <property type="entry name" value="L-LACTATE DEHYDROGENASE"/>
    <property type="match status" value="1"/>
</dbReference>
<dbReference type="Pfam" id="PF02866">
    <property type="entry name" value="Ldh_1_C"/>
    <property type="match status" value="1"/>
</dbReference>
<dbReference type="Pfam" id="PF00056">
    <property type="entry name" value="Ldh_1_N"/>
    <property type="match status" value="1"/>
</dbReference>
<dbReference type="PIRSF" id="PIRSF000102">
    <property type="entry name" value="Lac_mal_DH"/>
    <property type="match status" value="1"/>
</dbReference>
<dbReference type="PRINTS" id="PR00086">
    <property type="entry name" value="LLDHDRGNASE"/>
</dbReference>
<dbReference type="SUPFAM" id="SSF56327">
    <property type="entry name" value="LDH C-terminal domain-like"/>
    <property type="match status" value="1"/>
</dbReference>
<dbReference type="SUPFAM" id="SSF51735">
    <property type="entry name" value="NAD(P)-binding Rossmann-fold domains"/>
    <property type="match status" value="1"/>
</dbReference>
<feature type="chain" id="PRO_1000026469" description="Malate dehydrogenase">
    <location>
        <begin position="1"/>
        <end position="310"/>
    </location>
</feature>
<feature type="active site" description="Proton acceptor" evidence="1">
    <location>
        <position position="174"/>
    </location>
</feature>
<feature type="binding site" evidence="1">
    <location>
        <begin position="7"/>
        <end position="12"/>
    </location>
    <ligand>
        <name>NAD(+)</name>
        <dbReference type="ChEBI" id="CHEBI:57540"/>
    </ligand>
</feature>
<feature type="binding site" evidence="1">
    <location>
        <position position="32"/>
    </location>
    <ligand>
        <name>NAD(+)</name>
        <dbReference type="ChEBI" id="CHEBI:57540"/>
    </ligand>
</feature>
<feature type="binding site" evidence="1">
    <location>
        <position position="81"/>
    </location>
    <ligand>
        <name>substrate</name>
    </ligand>
</feature>
<feature type="binding site" evidence="1">
    <location>
        <position position="87"/>
    </location>
    <ligand>
        <name>substrate</name>
    </ligand>
</feature>
<feature type="binding site" evidence="1">
    <location>
        <position position="94"/>
    </location>
    <ligand>
        <name>NAD(+)</name>
        <dbReference type="ChEBI" id="CHEBI:57540"/>
    </ligand>
</feature>
<feature type="binding site" evidence="1">
    <location>
        <begin position="117"/>
        <end position="119"/>
    </location>
    <ligand>
        <name>NAD(+)</name>
        <dbReference type="ChEBI" id="CHEBI:57540"/>
    </ligand>
</feature>
<feature type="binding site" evidence="1">
    <location>
        <position position="119"/>
    </location>
    <ligand>
        <name>substrate</name>
    </ligand>
</feature>
<feature type="binding site" evidence="1">
    <location>
        <position position="150"/>
    </location>
    <ligand>
        <name>substrate</name>
    </ligand>
</feature>